<feature type="chain" id="PRO_0000161442" description="tRNA uridine(34) hydroxylase">
    <location>
        <begin position="1"/>
        <end position="322"/>
    </location>
</feature>
<feature type="domain" description="Rhodanese" evidence="1">
    <location>
        <begin position="125"/>
        <end position="219"/>
    </location>
</feature>
<feature type="active site" description="Cysteine persulfide intermediate" evidence="1">
    <location>
        <position position="179"/>
    </location>
</feature>
<sequence length="322" mass="37727">MKNQYRVLLYYKYVHIDNPEQFAEDHLKFCKDLGLKGRILVAGEGINGTVSGTVEQTDRYMSEMKSDPRFEDMVFKIDESEGHAFKKMHVRHRDELVTLRLEDDIDPNELTGKYLEPKEFYEAMQQEDTIVVDARNDYEYDLGHFRGAIRPDIKAFRELPEWIRDNKEKLEGKKILTYCTGGIRCEKFSGWLKKEGFEDVSQLHGGIVTYGKDPEVQGELWDGKCYVFDERISVPVNQKEHVIVGKDYFTGEPCERYVNCANPECNKQIICSEENEHRYLRGCTHECRVHPRNLYVKEHGLSEEEVQERLEKLKEEEHAAQS</sequence>
<gene>
    <name evidence="1" type="primary">trhO</name>
    <name type="ordered locus">BLi03574</name>
    <name type="ordered locus">BL00834</name>
</gene>
<organism>
    <name type="scientific">Bacillus licheniformis (strain ATCC 14580 / DSM 13 / JCM 2505 / CCUG 7422 / NBRC 12200 / NCIMB 9375 / NCTC 10341 / NRRL NRS-1264 / Gibson 46)</name>
    <dbReference type="NCBI Taxonomy" id="279010"/>
    <lineage>
        <taxon>Bacteria</taxon>
        <taxon>Bacillati</taxon>
        <taxon>Bacillota</taxon>
        <taxon>Bacilli</taxon>
        <taxon>Bacillales</taxon>
        <taxon>Bacillaceae</taxon>
        <taxon>Bacillus</taxon>
    </lineage>
</organism>
<proteinExistence type="inferred from homology"/>
<keyword id="KW-0560">Oxidoreductase</keyword>
<keyword id="KW-1185">Reference proteome</keyword>
<keyword id="KW-0819">tRNA processing</keyword>
<dbReference type="EC" id="1.14.-.-" evidence="1"/>
<dbReference type="EMBL" id="AE017333">
    <property type="protein sequence ID" value="AAU42399.1"/>
    <property type="molecule type" value="Genomic_DNA"/>
</dbReference>
<dbReference type="EMBL" id="CP000002">
    <property type="protein sequence ID" value="AAU25028.1"/>
    <property type="molecule type" value="Genomic_DNA"/>
</dbReference>
<dbReference type="RefSeq" id="WP_011198286.1">
    <property type="nucleotide sequence ID" value="NC_006322.1"/>
</dbReference>
<dbReference type="SMR" id="Q65EW5"/>
<dbReference type="STRING" id="279010.BL00834"/>
<dbReference type="KEGG" id="bld:BLi03574"/>
<dbReference type="KEGG" id="bli:BL00834"/>
<dbReference type="PATRIC" id="fig|279010.13.peg.3633"/>
<dbReference type="eggNOG" id="COG1054">
    <property type="taxonomic scope" value="Bacteria"/>
</dbReference>
<dbReference type="HOGENOM" id="CLU_038878_1_0_9"/>
<dbReference type="Proteomes" id="UP000000606">
    <property type="component" value="Chromosome"/>
</dbReference>
<dbReference type="GO" id="GO:0016705">
    <property type="term" value="F:oxidoreductase activity, acting on paired donors, with incorporation or reduction of molecular oxygen"/>
    <property type="evidence" value="ECO:0007669"/>
    <property type="project" value="UniProtKB-UniRule"/>
</dbReference>
<dbReference type="GO" id="GO:0006400">
    <property type="term" value="P:tRNA modification"/>
    <property type="evidence" value="ECO:0007669"/>
    <property type="project" value="UniProtKB-UniRule"/>
</dbReference>
<dbReference type="CDD" id="cd01518">
    <property type="entry name" value="RHOD_YceA"/>
    <property type="match status" value="1"/>
</dbReference>
<dbReference type="Gene3D" id="3.30.70.100">
    <property type="match status" value="1"/>
</dbReference>
<dbReference type="Gene3D" id="3.40.250.10">
    <property type="entry name" value="Rhodanese-like domain"/>
    <property type="match status" value="1"/>
</dbReference>
<dbReference type="HAMAP" id="MF_00469">
    <property type="entry name" value="TrhO"/>
    <property type="match status" value="1"/>
</dbReference>
<dbReference type="InterPro" id="IPR001763">
    <property type="entry name" value="Rhodanese-like_dom"/>
</dbReference>
<dbReference type="InterPro" id="IPR036873">
    <property type="entry name" value="Rhodanese-like_dom_sf"/>
</dbReference>
<dbReference type="InterPro" id="IPR022111">
    <property type="entry name" value="Rhodanese_C"/>
</dbReference>
<dbReference type="InterPro" id="IPR020936">
    <property type="entry name" value="TrhO"/>
</dbReference>
<dbReference type="InterPro" id="IPR040503">
    <property type="entry name" value="TRHO_N"/>
</dbReference>
<dbReference type="NCBIfam" id="NF001135">
    <property type="entry name" value="PRK00142.1-3"/>
    <property type="match status" value="1"/>
</dbReference>
<dbReference type="PANTHER" id="PTHR43268:SF3">
    <property type="entry name" value="RHODANESE-LIKE DOMAIN-CONTAINING PROTEIN 7-RELATED"/>
    <property type="match status" value="1"/>
</dbReference>
<dbReference type="PANTHER" id="PTHR43268">
    <property type="entry name" value="THIOSULFATE SULFURTRANSFERASE/RHODANESE-LIKE DOMAIN-CONTAINING PROTEIN 2"/>
    <property type="match status" value="1"/>
</dbReference>
<dbReference type="Pfam" id="PF00581">
    <property type="entry name" value="Rhodanese"/>
    <property type="match status" value="1"/>
</dbReference>
<dbReference type="Pfam" id="PF12368">
    <property type="entry name" value="Rhodanese_C"/>
    <property type="match status" value="1"/>
</dbReference>
<dbReference type="Pfam" id="PF17773">
    <property type="entry name" value="UPF0176_N"/>
    <property type="match status" value="1"/>
</dbReference>
<dbReference type="SMART" id="SM00450">
    <property type="entry name" value="RHOD"/>
    <property type="match status" value="1"/>
</dbReference>
<dbReference type="SUPFAM" id="SSF52821">
    <property type="entry name" value="Rhodanese/Cell cycle control phosphatase"/>
    <property type="match status" value="1"/>
</dbReference>
<dbReference type="PROSITE" id="PS50206">
    <property type="entry name" value="RHODANESE_3"/>
    <property type="match status" value="1"/>
</dbReference>
<accession>Q65EW5</accession>
<accession>Q62QD2</accession>
<reference key="1">
    <citation type="journal article" date="2004" name="J. Mol. Microbiol. Biotechnol.">
        <title>The complete genome sequence of Bacillus licheniformis DSM13, an organism with great industrial potential.</title>
        <authorList>
            <person name="Veith B."/>
            <person name="Herzberg C."/>
            <person name="Steckel S."/>
            <person name="Feesche J."/>
            <person name="Maurer K.H."/>
            <person name="Ehrenreich P."/>
            <person name="Baeumer S."/>
            <person name="Henne A."/>
            <person name="Liesegang H."/>
            <person name="Merkl R."/>
            <person name="Ehrenreich A."/>
            <person name="Gottschalk G."/>
        </authorList>
    </citation>
    <scope>NUCLEOTIDE SEQUENCE [LARGE SCALE GENOMIC DNA]</scope>
    <source>
        <strain>ATCC 14580 / DSM 13 / JCM 2505 / CCUG 7422 / NBRC 12200 / NCIMB 9375 / NCTC 10341 / NRRL NRS-1264 / Gibson 46</strain>
    </source>
</reference>
<reference key="2">
    <citation type="journal article" date="2004" name="Genome Biol.">
        <title>Complete genome sequence of the industrial bacterium Bacillus licheniformis and comparisons with closely related Bacillus species.</title>
        <authorList>
            <person name="Rey M.W."/>
            <person name="Ramaiya P."/>
            <person name="Nelson B.A."/>
            <person name="Brody-Karpin S.D."/>
            <person name="Zaretsky E.J."/>
            <person name="Tang M."/>
            <person name="Lopez de Leon A."/>
            <person name="Xiang H."/>
            <person name="Gusti V."/>
            <person name="Clausen I.G."/>
            <person name="Olsen P.B."/>
            <person name="Rasmussen M.D."/>
            <person name="Andersen J.T."/>
            <person name="Joergensen P.L."/>
            <person name="Larsen T.S."/>
            <person name="Sorokin A."/>
            <person name="Bolotin A."/>
            <person name="Lapidus A."/>
            <person name="Galleron N."/>
            <person name="Ehrlich S.D."/>
            <person name="Berka R.M."/>
        </authorList>
    </citation>
    <scope>NUCLEOTIDE SEQUENCE [LARGE SCALE GENOMIC DNA]</scope>
    <source>
        <strain>ATCC 14580 / DSM 13 / JCM 2505 / CCUG 7422 / NBRC 12200 / NCIMB 9375 / NCTC 10341 / NRRL NRS-1264 / Gibson 46</strain>
    </source>
</reference>
<protein>
    <recommendedName>
        <fullName evidence="1">tRNA uridine(34) hydroxylase</fullName>
        <ecNumber evidence="1">1.14.-.-</ecNumber>
    </recommendedName>
    <alternativeName>
        <fullName evidence="1">tRNA hydroxylation protein O</fullName>
    </alternativeName>
</protein>
<comment type="function">
    <text evidence="1">Catalyzes oxygen-dependent 5-hydroxyuridine (ho5U) modification at position 34 in tRNAs.</text>
</comment>
<comment type="catalytic activity">
    <reaction evidence="1">
        <text>uridine(34) in tRNA + AH2 + O2 = 5-hydroxyuridine(34) in tRNA + A + H2O</text>
        <dbReference type="Rhea" id="RHEA:64224"/>
        <dbReference type="Rhea" id="RHEA-COMP:11727"/>
        <dbReference type="Rhea" id="RHEA-COMP:13381"/>
        <dbReference type="ChEBI" id="CHEBI:13193"/>
        <dbReference type="ChEBI" id="CHEBI:15377"/>
        <dbReference type="ChEBI" id="CHEBI:15379"/>
        <dbReference type="ChEBI" id="CHEBI:17499"/>
        <dbReference type="ChEBI" id="CHEBI:65315"/>
        <dbReference type="ChEBI" id="CHEBI:136877"/>
    </reaction>
</comment>
<comment type="similarity">
    <text evidence="1">Belongs to the TrhO family.</text>
</comment>
<name>TRHO_BACLD</name>
<evidence type="ECO:0000255" key="1">
    <source>
        <dbReference type="HAMAP-Rule" id="MF_00469"/>
    </source>
</evidence>